<gene>
    <name evidence="1" type="primary">ndk</name>
    <name type="ordered locus">Shew185_2377</name>
</gene>
<keyword id="KW-0067">ATP-binding</keyword>
<keyword id="KW-0963">Cytoplasm</keyword>
<keyword id="KW-0418">Kinase</keyword>
<keyword id="KW-0460">Magnesium</keyword>
<keyword id="KW-0479">Metal-binding</keyword>
<keyword id="KW-0546">Nucleotide metabolism</keyword>
<keyword id="KW-0547">Nucleotide-binding</keyword>
<keyword id="KW-0597">Phosphoprotein</keyword>
<keyword id="KW-0808">Transferase</keyword>
<accession>A6WNX6</accession>
<sequence>MAIERTFSIIKPDAVAKNHIGAIYNRFETAGLKIVASKMLHLTKEQAEGFYAEHSERGFFGALVAFMTSGPIMVQVLEGENAVLAHREILGATNPAQAAPGTIRADFAESIDENAAHGSDAVESAAREIAYFFSAEELCPRTR</sequence>
<comment type="function">
    <text evidence="1">Major role in the synthesis of nucleoside triphosphates other than ATP. The ATP gamma phosphate is transferred to the NDP beta phosphate via a ping-pong mechanism, using a phosphorylated active-site intermediate.</text>
</comment>
<comment type="catalytic activity">
    <reaction evidence="1">
        <text>a 2'-deoxyribonucleoside 5'-diphosphate + ATP = a 2'-deoxyribonucleoside 5'-triphosphate + ADP</text>
        <dbReference type="Rhea" id="RHEA:44640"/>
        <dbReference type="ChEBI" id="CHEBI:30616"/>
        <dbReference type="ChEBI" id="CHEBI:61560"/>
        <dbReference type="ChEBI" id="CHEBI:73316"/>
        <dbReference type="ChEBI" id="CHEBI:456216"/>
        <dbReference type="EC" id="2.7.4.6"/>
    </reaction>
</comment>
<comment type="catalytic activity">
    <reaction evidence="1">
        <text>a ribonucleoside 5'-diphosphate + ATP = a ribonucleoside 5'-triphosphate + ADP</text>
        <dbReference type="Rhea" id="RHEA:18113"/>
        <dbReference type="ChEBI" id="CHEBI:30616"/>
        <dbReference type="ChEBI" id="CHEBI:57930"/>
        <dbReference type="ChEBI" id="CHEBI:61557"/>
        <dbReference type="ChEBI" id="CHEBI:456216"/>
        <dbReference type="EC" id="2.7.4.6"/>
    </reaction>
</comment>
<comment type="cofactor">
    <cofactor evidence="1">
        <name>Mg(2+)</name>
        <dbReference type="ChEBI" id="CHEBI:18420"/>
    </cofactor>
</comment>
<comment type="subunit">
    <text evidence="1">Homotetramer.</text>
</comment>
<comment type="subcellular location">
    <subcellularLocation>
        <location evidence="1">Cytoplasm</location>
    </subcellularLocation>
</comment>
<comment type="similarity">
    <text evidence="1">Belongs to the NDK family.</text>
</comment>
<name>NDK_SHEB8</name>
<reference key="1">
    <citation type="submission" date="2007-07" db="EMBL/GenBank/DDBJ databases">
        <title>Complete sequence of chromosome of Shewanella baltica OS185.</title>
        <authorList>
            <consortium name="US DOE Joint Genome Institute"/>
            <person name="Copeland A."/>
            <person name="Lucas S."/>
            <person name="Lapidus A."/>
            <person name="Barry K."/>
            <person name="Glavina del Rio T."/>
            <person name="Dalin E."/>
            <person name="Tice H."/>
            <person name="Pitluck S."/>
            <person name="Sims D."/>
            <person name="Brettin T."/>
            <person name="Bruce D."/>
            <person name="Detter J.C."/>
            <person name="Han C."/>
            <person name="Schmutz J."/>
            <person name="Larimer F."/>
            <person name="Land M."/>
            <person name="Hauser L."/>
            <person name="Kyrpides N."/>
            <person name="Mikhailova N."/>
            <person name="Brettar I."/>
            <person name="Rodrigues J."/>
            <person name="Konstantinidis K."/>
            <person name="Tiedje J."/>
            <person name="Richardson P."/>
        </authorList>
    </citation>
    <scope>NUCLEOTIDE SEQUENCE [LARGE SCALE GENOMIC DNA]</scope>
    <source>
        <strain>OS185</strain>
    </source>
</reference>
<feature type="chain" id="PRO_1000026293" description="Nucleoside diphosphate kinase">
    <location>
        <begin position="1"/>
        <end position="143"/>
    </location>
</feature>
<feature type="active site" description="Pros-phosphohistidine intermediate" evidence="1">
    <location>
        <position position="117"/>
    </location>
</feature>
<feature type="binding site" evidence="1">
    <location>
        <position position="11"/>
    </location>
    <ligand>
        <name>ATP</name>
        <dbReference type="ChEBI" id="CHEBI:30616"/>
    </ligand>
</feature>
<feature type="binding site" evidence="1">
    <location>
        <position position="59"/>
    </location>
    <ligand>
        <name>ATP</name>
        <dbReference type="ChEBI" id="CHEBI:30616"/>
    </ligand>
</feature>
<feature type="binding site" evidence="1">
    <location>
        <position position="87"/>
    </location>
    <ligand>
        <name>ATP</name>
        <dbReference type="ChEBI" id="CHEBI:30616"/>
    </ligand>
</feature>
<feature type="binding site" evidence="1">
    <location>
        <position position="93"/>
    </location>
    <ligand>
        <name>ATP</name>
        <dbReference type="ChEBI" id="CHEBI:30616"/>
    </ligand>
</feature>
<feature type="binding site" evidence="1">
    <location>
        <position position="104"/>
    </location>
    <ligand>
        <name>ATP</name>
        <dbReference type="ChEBI" id="CHEBI:30616"/>
    </ligand>
</feature>
<feature type="binding site" evidence="1">
    <location>
        <position position="114"/>
    </location>
    <ligand>
        <name>ATP</name>
        <dbReference type="ChEBI" id="CHEBI:30616"/>
    </ligand>
</feature>
<protein>
    <recommendedName>
        <fullName evidence="1">Nucleoside diphosphate kinase</fullName>
        <shortName evidence="1">NDK</shortName>
        <shortName evidence="1">NDP kinase</shortName>
        <ecNumber evidence="1">2.7.4.6</ecNumber>
    </recommendedName>
    <alternativeName>
        <fullName evidence="1">Nucleoside-2-P kinase</fullName>
    </alternativeName>
</protein>
<organism>
    <name type="scientific">Shewanella baltica (strain OS185)</name>
    <dbReference type="NCBI Taxonomy" id="402882"/>
    <lineage>
        <taxon>Bacteria</taxon>
        <taxon>Pseudomonadati</taxon>
        <taxon>Pseudomonadota</taxon>
        <taxon>Gammaproteobacteria</taxon>
        <taxon>Alteromonadales</taxon>
        <taxon>Shewanellaceae</taxon>
        <taxon>Shewanella</taxon>
    </lineage>
</organism>
<proteinExistence type="inferred from homology"/>
<dbReference type="EC" id="2.7.4.6" evidence="1"/>
<dbReference type="EMBL" id="CP000753">
    <property type="protein sequence ID" value="ABS08515.1"/>
    <property type="molecule type" value="Genomic_DNA"/>
</dbReference>
<dbReference type="RefSeq" id="WP_006081848.1">
    <property type="nucleotide sequence ID" value="NC_009665.1"/>
</dbReference>
<dbReference type="SMR" id="A6WNX6"/>
<dbReference type="GeneID" id="11774803"/>
<dbReference type="KEGG" id="sbm:Shew185_2377"/>
<dbReference type="HOGENOM" id="CLU_060216_8_1_6"/>
<dbReference type="GO" id="GO:0005737">
    <property type="term" value="C:cytoplasm"/>
    <property type="evidence" value="ECO:0007669"/>
    <property type="project" value="UniProtKB-SubCell"/>
</dbReference>
<dbReference type="GO" id="GO:0005524">
    <property type="term" value="F:ATP binding"/>
    <property type="evidence" value="ECO:0007669"/>
    <property type="project" value="UniProtKB-UniRule"/>
</dbReference>
<dbReference type="GO" id="GO:0046872">
    <property type="term" value="F:metal ion binding"/>
    <property type="evidence" value="ECO:0007669"/>
    <property type="project" value="UniProtKB-KW"/>
</dbReference>
<dbReference type="GO" id="GO:0004550">
    <property type="term" value="F:nucleoside diphosphate kinase activity"/>
    <property type="evidence" value="ECO:0007669"/>
    <property type="project" value="UniProtKB-UniRule"/>
</dbReference>
<dbReference type="GO" id="GO:0006241">
    <property type="term" value="P:CTP biosynthetic process"/>
    <property type="evidence" value="ECO:0007669"/>
    <property type="project" value="UniProtKB-UniRule"/>
</dbReference>
<dbReference type="GO" id="GO:0006183">
    <property type="term" value="P:GTP biosynthetic process"/>
    <property type="evidence" value="ECO:0007669"/>
    <property type="project" value="UniProtKB-UniRule"/>
</dbReference>
<dbReference type="GO" id="GO:0006228">
    <property type="term" value="P:UTP biosynthetic process"/>
    <property type="evidence" value="ECO:0007669"/>
    <property type="project" value="UniProtKB-UniRule"/>
</dbReference>
<dbReference type="CDD" id="cd04413">
    <property type="entry name" value="NDPk_I"/>
    <property type="match status" value="1"/>
</dbReference>
<dbReference type="FunFam" id="3.30.70.141:FF:000001">
    <property type="entry name" value="Nucleoside diphosphate kinase"/>
    <property type="match status" value="1"/>
</dbReference>
<dbReference type="Gene3D" id="3.30.70.141">
    <property type="entry name" value="Nucleoside diphosphate kinase-like domain"/>
    <property type="match status" value="1"/>
</dbReference>
<dbReference type="HAMAP" id="MF_00451">
    <property type="entry name" value="NDP_kinase"/>
    <property type="match status" value="1"/>
</dbReference>
<dbReference type="InterPro" id="IPR034907">
    <property type="entry name" value="NDK-like_dom"/>
</dbReference>
<dbReference type="InterPro" id="IPR036850">
    <property type="entry name" value="NDK-like_dom_sf"/>
</dbReference>
<dbReference type="InterPro" id="IPR001564">
    <property type="entry name" value="Nucleoside_diP_kinase"/>
</dbReference>
<dbReference type="InterPro" id="IPR023005">
    <property type="entry name" value="Nucleoside_diP_kinase_AS"/>
</dbReference>
<dbReference type="NCBIfam" id="NF001908">
    <property type="entry name" value="PRK00668.1"/>
    <property type="match status" value="1"/>
</dbReference>
<dbReference type="PANTHER" id="PTHR46161">
    <property type="entry name" value="NUCLEOSIDE DIPHOSPHATE KINASE"/>
    <property type="match status" value="1"/>
</dbReference>
<dbReference type="PANTHER" id="PTHR46161:SF3">
    <property type="entry name" value="NUCLEOSIDE DIPHOSPHATE KINASE DDB_G0292928-RELATED"/>
    <property type="match status" value="1"/>
</dbReference>
<dbReference type="Pfam" id="PF00334">
    <property type="entry name" value="NDK"/>
    <property type="match status" value="1"/>
</dbReference>
<dbReference type="PRINTS" id="PR01243">
    <property type="entry name" value="NUCDPKINASE"/>
</dbReference>
<dbReference type="SMART" id="SM00562">
    <property type="entry name" value="NDK"/>
    <property type="match status" value="1"/>
</dbReference>
<dbReference type="SUPFAM" id="SSF54919">
    <property type="entry name" value="Nucleoside diphosphate kinase, NDK"/>
    <property type="match status" value="1"/>
</dbReference>
<dbReference type="PROSITE" id="PS00469">
    <property type="entry name" value="NDPK"/>
    <property type="match status" value="1"/>
</dbReference>
<dbReference type="PROSITE" id="PS51374">
    <property type="entry name" value="NDPK_LIKE"/>
    <property type="match status" value="1"/>
</dbReference>
<evidence type="ECO:0000255" key="1">
    <source>
        <dbReference type="HAMAP-Rule" id="MF_00451"/>
    </source>
</evidence>